<reference key="1">
    <citation type="online journal article" date="1996" name="Plant Gene Register">
        <title>Characterization of a cDNA encoding a third aspartate transcarbamoylase (pyrB3) from pea.</title>
        <authorList>
            <person name="Williamson C.L."/>
            <person name="To L."/>
            <person name="Slocum R.D."/>
        </authorList>
        <locator>PGR96-063</locator>
    </citation>
    <scope>NUCLEOTIDE SEQUENCE [MRNA]</scope>
    <source>
        <strain>cv. Wando</strain>
        <tissue>Leaf</tissue>
    </source>
</reference>
<sequence>MTASSSLFSCSMHMEVLTPKISKWPKDFVSCHSKISYVETNYLKSTCYPISRFLCINNLSKCDKMIKTRQRDGIHCFSEGQKFQLDDVIEAQQFDRDILNAIFEIARDMENIERNSPESQILKGYLMATLFYEPSTRTRLSFESAMRRLGGEVLTTENAREFSSAAKGETLEDTIRTVEGYSDLIVLRHFESGAARRAAAIAGIPIVNAGDGPGQHPSQALLDVYTIEREIGKLDGIKVGLVGDLANGRTVRSLAYLLAKYKDVKIYFVSPEVVKMKDDIKDYLTSKGVDWEESSDLVEVASECDVVYQTRIQKERFGERLDLYEKARGKFIVNQNILNAMQRHAVIMHPLPRLDEITVDVDADPRAAYFRQAKYGLYIRMALLKLLLVGW</sequence>
<protein>
    <recommendedName>
        <fullName>Aspartate carbamoyltransferase 3, chloroplastic</fullName>
        <ecNumber evidence="1">2.1.3.2</ecNumber>
    </recommendedName>
    <alternativeName>
        <fullName>Aspartate transcarbamylase 3</fullName>
        <shortName>ATCase 3</shortName>
    </alternativeName>
</protein>
<feature type="transit peptide" description="Chloroplast" evidence="3">
    <location>
        <begin position="1"/>
        <end position="69"/>
    </location>
</feature>
<feature type="chain" id="PRO_0000020351" description="Aspartate carbamoyltransferase 3, chloroplastic">
    <location>
        <begin position="70"/>
        <end position="391"/>
    </location>
</feature>
<feature type="binding site" evidence="1">
    <location>
        <position position="137"/>
    </location>
    <ligand>
        <name>carbamoyl phosphate</name>
        <dbReference type="ChEBI" id="CHEBI:58228"/>
    </ligand>
</feature>
<feature type="binding site" evidence="2">
    <location>
        <position position="137"/>
    </location>
    <ligand>
        <name>UMP</name>
        <dbReference type="ChEBI" id="CHEBI:57865"/>
        <note>inhibitor</note>
    </ligand>
</feature>
<feature type="binding site" evidence="1">
    <location>
        <position position="138"/>
    </location>
    <ligand>
        <name>carbamoyl phosphate</name>
        <dbReference type="ChEBI" id="CHEBI:58228"/>
    </ligand>
</feature>
<feature type="binding site" evidence="2">
    <location>
        <position position="138"/>
    </location>
    <ligand>
        <name>UMP</name>
        <dbReference type="ChEBI" id="CHEBI:57865"/>
        <note>inhibitor</note>
    </ligand>
</feature>
<feature type="binding site" evidence="1">
    <location>
        <position position="167"/>
    </location>
    <ligand>
        <name>L-aspartate</name>
        <dbReference type="ChEBI" id="CHEBI:29991"/>
    </ligand>
</feature>
<feature type="binding site" evidence="1">
    <location>
        <position position="188"/>
    </location>
    <ligand>
        <name>carbamoyl phosphate</name>
        <dbReference type="ChEBI" id="CHEBI:58228"/>
    </ligand>
</feature>
<feature type="binding site" evidence="2">
    <location>
        <position position="188"/>
    </location>
    <ligand>
        <name>UMP</name>
        <dbReference type="ChEBI" id="CHEBI:57865"/>
        <note>inhibitor</note>
    </ligand>
</feature>
<feature type="binding site" evidence="1">
    <location>
        <position position="216"/>
    </location>
    <ligand>
        <name>carbamoyl phosphate</name>
        <dbReference type="ChEBI" id="CHEBI:58228"/>
    </ligand>
</feature>
<feature type="binding site" evidence="2">
    <location>
        <position position="216"/>
    </location>
    <ligand>
        <name>UMP</name>
        <dbReference type="ChEBI" id="CHEBI:57865"/>
        <note>inhibitor</note>
    </ligand>
</feature>
<feature type="binding site" evidence="1">
    <location>
        <position position="219"/>
    </location>
    <ligand>
        <name>carbamoyl phosphate</name>
        <dbReference type="ChEBI" id="CHEBI:58228"/>
    </ligand>
</feature>
<feature type="binding site" evidence="1">
    <location>
        <position position="249"/>
    </location>
    <ligand>
        <name>L-aspartate</name>
        <dbReference type="ChEBI" id="CHEBI:29991"/>
    </ligand>
</feature>
<feature type="binding site" evidence="2">
    <location>
        <position position="249"/>
    </location>
    <ligand>
        <name>UMP</name>
        <dbReference type="ChEBI" id="CHEBI:57865"/>
        <note>inhibitor</note>
    </ligand>
</feature>
<feature type="binding site" evidence="1">
    <location>
        <position position="311"/>
    </location>
    <ligand>
        <name>L-aspartate</name>
        <dbReference type="ChEBI" id="CHEBI:29991"/>
    </ligand>
</feature>
<feature type="binding site" evidence="2">
    <location>
        <position position="311"/>
    </location>
    <ligand>
        <name>UMP</name>
        <dbReference type="ChEBI" id="CHEBI:57865"/>
        <note>inhibitor</note>
    </ligand>
</feature>
<feature type="binding site" evidence="1">
    <location>
        <position position="351"/>
    </location>
    <ligand>
        <name>carbamoyl phosphate</name>
        <dbReference type="ChEBI" id="CHEBI:58228"/>
    </ligand>
</feature>
<feature type="binding site" evidence="1">
    <location>
        <position position="352"/>
    </location>
    <ligand>
        <name>carbamoyl phosphate</name>
        <dbReference type="ChEBI" id="CHEBI:58228"/>
    </ligand>
</feature>
<dbReference type="EC" id="2.1.3.2" evidence="1"/>
<dbReference type="EMBL" id="U05293">
    <property type="protein sequence ID" value="AAB67857.1"/>
    <property type="molecule type" value="mRNA"/>
</dbReference>
<dbReference type="PIR" id="T06425">
    <property type="entry name" value="T06425"/>
</dbReference>
<dbReference type="SMR" id="Q43064"/>
<dbReference type="EnsemblPlants" id="Psat7g089200.1">
    <property type="protein sequence ID" value="Psat7g089200.1.cds"/>
    <property type="gene ID" value="Psat7g089200"/>
</dbReference>
<dbReference type="EnsemblPlants" id="Psat7g089200.2">
    <property type="protein sequence ID" value="Psat7g089200.2.cds"/>
    <property type="gene ID" value="Psat7g089200"/>
</dbReference>
<dbReference type="Gramene" id="Psat7g089200.1">
    <property type="protein sequence ID" value="Psat7g089200.1.cds"/>
    <property type="gene ID" value="Psat7g089200"/>
</dbReference>
<dbReference type="Gramene" id="Psat7g089200.2">
    <property type="protein sequence ID" value="Psat7g089200.2.cds"/>
    <property type="gene ID" value="Psat7g089200"/>
</dbReference>
<dbReference type="UniPathway" id="UPA00070">
    <property type="reaction ID" value="UER00116"/>
</dbReference>
<dbReference type="GO" id="GO:0009507">
    <property type="term" value="C:chloroplast"/>
    <property type="evidence" value="ECO:0007669"/>
    <property type="project" value="UniProtKB-SubCell"/>
</dbReference>
<dbReference type="GO" id="GO:0016597">
    <property type="term" value="F:amino acid binding"/>
    <property type="evidence" value="ECO:0007669"/>
    <property type="project" value="InterPro"/>
</dbReference>
<dbReference type="GO" id="GO:0004070">
    <property type="term" value="F:aspartate carbamoyltransferase activity"/>
    <property type="evidence" value="ECO:0007669"/>
    <property type="project" value="UniProtKB-EC"/>
</dbReference>
<dbReference type="GO" id="GO:0006207">
    <property type="term" value="P:'de novo' pyrimidine nucleobase biosynthetic process"/>
    <property type="evidence" value="ECO:0007669"/>
    <property type="project" value="InterPro"/>
</dbReference>
<dbReference type="GO" id="GO:0044205">
    <property type="term" value="P:'de novo' UMP biosynthetic process"/>
    <property type="evidence" value="ECO:0007669"/>
    <property type="project" value="UniProtKB-UniPathway"/>
</dbReference>
<dbReference type="GO" id="GO:0006520">
    <property type="term" value="P:amino acid metabolic process"/>
    <property type="evidence" value="ECO:0007669"/>
    <property type="project" value="InterPro"/>
</dbReference>
<dbReference type="FunFam" id="3.40.50.1370:FF:000001">
    <property type="entry name" value="Aspartate carbamoyltransferase"/>
    <property type="match status" value="1"/>
</dbReference>
<dbReference type="FunFam" id="3.40.50.1370:FF:000002">
    <property type="entry name" value="Aspartate carbamoyltransferase 2"/>
    <property type="match status" value="1"/>
</dbReference>
<dbReference type="Gene3D" id="3.40.50.1370">
    <property type="entry name" value="Aspartate/ornithine carbamoyltransferase"/>
    <property type="match status" value="2"/>
</dbReference>
<dbReference type="HAMAP" id="MF_00001">
    <property type="entry name" value="Asp_carb_tr"/>
    <property type="match status" value="1"/>
</dbReference>
<dbReference type="InterPro" id="IPR006132">
    <property type="entry name" value="Asp/Orn_carbamoyltranf_P-bd"/>
</dbReference>
<dbReference type="InterPro" id="IPR006130">
    <property type="entry name" value="Asp/Orn_carbamoylTrfase"/>
</dbReference>
<dbReference type="InterPro" id="IPR036901">
    <property type="entry name" value="Asp/Orn_carbamoylTrfase_sf"/>
</dbReference>
<dbReference type="InterPro" id="IPR002082">
    <property type="entry name" value="Asp_carbamoyltransf"/>
</dbReference>
<dbReference type="InterPro" id="IPR006131">
    <property type="entry name" value="Asp_carbamoyltransf_Asp/Orn-bd"/>
</dbReference>
<dbReference type="NCBIfam" id="TIGR00670">
    <property type="entry name" value="asp_carb_tr"/>
    <property type="match status" value="1"/>
</dbReference>
<dbReference type="NCBIfam" id="NF002032">
    <property type="entry name" value="PRK00856.1"/>
    <property type="match status" value="1"/>
</dbReference>
<dbReference type="PANTHER" id="PTHR45753:SF6">
    <property type="entry name" value="ASPARTATE CARBAMOYLTRANSFERASE"/>
    <property type="match status" value="1"/>
</dbReference>
<dbReference type="PANTHER" id="PTHR45753">
    <property type="entry name" value="ORNITHINE CARBAMOYLTRANSFERASE, MITOCHONDRIAL"/>
    <property type="match status" value="1"/>
</dbReference>
<dbReference type="Pfam" id="PF00185">
    <property type="entry name" value="OTCace"/>
    <property type="match status" value="1"/>
</dbReference>
<dbReference type="Pfam" id="PF02729">
    <property type="entry name" value="OTCace_N"/>
    <property type="match status" value="1"/>
</dbReference>
<dbReference type="PRINTS" id="PR00100">
    <property type="entry name" value="AOTCASE"/>
</dbReference>
<dbReference type="PRINTS" id="PR00101">
    <property type="entry name" value="ATCASE"/>
</dbReference>
<dbReference type="SUPFAM" id="SSF53671">
    <property type="entry name" value="Aspartate/ornithine carbamoyltransferase"/>
    <property type="match status" value="1"/>
</dbReference>
<dbReference type="PROSITE" id="PS00097">
    <property type="entry name" value="CARBAMOYLTRANSFERASE"/>
    <property type="match status" value="1"/>
</dbReference>
<accession>Q43064</accession>
<gene>
    <name type="primary">PYRB3</name>
</gene>
<evidence type="ECO:0000250" key="1">
    <source>
        <dbReference type="UniProtKB" id="P0A786"/>
    </source>
</evidence>
<evidence type="ECO:0000250" key="2">
    <source>
        <dbReference type="UniProtKB" id="P49077"/>
    </source>
</evidence>
<evidence type="ECO:0000255" key="3"/>
<evidence type="ECO:0000305" key="4"/>
<name>PYRB3_PEA</name>
<keyword id="KW-0021">Allosteric enzyme</keyword>
<keyword id="KW-0150">Chloroplast</keyword>
<keyword id="KW-0934">Plastid</keyword>
<keyword id="KW-0665">Pyrimidine biosynthesis</keyword>
<keyword id="KW-0808">Transferase</keyword>
<keyword id="KW-0809">Transit peptide</keyword>
<organism>
    <name type="scientific">Pisum sativum</name>
    <name type="common">Garden pea</name>
    <name type="synonym">Lathyrus oleraceus</name>
    <dbReference type="NCBI Taxonomy" id="3888"/>
    <lineage>
        <taxon>Eukaryota</taxon>
        <taxon>Viridiplantae</taxon>
        <taxon>Streptophyta</taxon>
        <taxon>Embryophyta</taxon>
        <taxon>Tracheophyta</taxon>
        <taxon>Spermatophyta</taxon>
        <taxon>Magnoliopsida</taxon>
        <taxon>eudicotyledons</taxon>
        <taxon>Gunneridae</taxon>
        <taxon>Pentapetalae</taxon>
        <taxon>rosids</taxon>
        <taxon>fabids</taxon>
        <taxon>Fabales</taxon>
        <taxon>Fabaceae</taxon>
        <taxon>Papilionoideae</taxon>
        <taxon>50 kb inversion clade</taxon>
        <taxon>NPAAA clade</taxon>
        <taxon>Hologalegina</taxon>
        <taxon>IRL clade</taxon>
        <taxon>Fabeae</taxon>
        <taxon>Pisum</taxon>
    </lineage>
</organism>
<comment type="function">
    <text evidence="1">Catalyzes the condensation of carbamoyl phosphate and aspartate to form carbamoyl aspartate and inorganic phosphate, the committed step in the de novo pyrimidine nucleotide biosynthesis pathway.</text>
</comment>
<comment type="catalytic activity">
    <reaction evidence="1">
        <text>carbamoyl phosphate + L-aspartate = N-carbamoyl-L-aspartate + phosphate + H(+)</text>
        <dbReference type="Rhea" id="RHEA:20013"/>
        <dbReference type="ChEBI" id="CHEBI:15378"/>
        <dbReference type="ChEBI" id="CHEBI:29991"/>
        <dbReference type="ChEBI" id="CHEBI:32814"/>
        <dbReference type="ChEBI" id="CHEBI:43474"/>
        <dbReference type="ChEBI" id="CHEBI:58228"/>
        <dbReference type="EC" id="2.1.3.2"/>
    </reaction>
</comment>
<comment type="activity regulation">
    <text evidence="2">Feedback inhibited by UMP.</text>
</comment>
<comment type="pathway">
    <text evidence="1">Pyrimidine metabolism; UMP biosynthesis via de novo pathway; (S)-dihydroorotate from bicarbonate: step 2/3.</text>
</comment>
<comment type="subunit">
    <text evidence="4">Homotrimer.</text>
</comment>
<comment type="subcellular location">
    <subcellularLocation>
        <location>Plastid</location>
        <location>Chloroplast</location>
    </subcellularLocation>
</comment>
<comment type="similarity">
    <text evidence="4">Belongs to the aspartate/ornithine carbamoyltransferase superfamily. ATCase family.</text>
</comment>
<proteinExistence type="evidence at transcript level"/>